<gene>
    <name evidence="1" type="primary">metJ</name>
    <name type="ordered locus">HD_0675</name>
</gene>
<evidence type="ECO:0000255" key="1">
    <source>
        <dbReference type="HAMAP-Rule" id="MF_00744"/>
    </source>
</evidence>
<reference key="1">
    <citation type="submission" date="2003-06" db="EMBL/GenBank/DDBJ databases">
        <title>The complete genome sequence of Haemophilus ducreyi.</title>
        <authorList>
            <person name="Munson R.S. Jr."/>
            <person name="Ray W.C."/>
            <person name="Mahairas G."/>
            <person name="Sabo P."/>
            <person name="Mungur R."/>
            <person name="Johnson L."/>
            <person name="Nguyen D."/>
            <person name="Wang J."/>
            <person name="Forst C."/>
            <person name="Hood L."/>
        </authorList>
    </citation>
    <scope>NUCLEOTIDE SEQUENCE [LARGE SCALE GENOMIC DNA]</scope>
    <source>
        <strain>35000HP / ATCC 700724</strain>
    </source>
</reference>
<name>METJ_HAEDU</name>
<proteinExistence type="inferred from homology"/>
<dbReference type="EMBL" id="AE017143">
    <property type="protein sequence ID" value="AAP95596.1"/>
    <property type="molecule type" value="Genomic_DNA"/>
</dbReference>
<dbReference type="RefSeq" id="WP_010944648.1">
    <property type="nucleotide sequence ID" value="NC_002940.2"/>
</dbReference>
<dbReference type="SMR" id="Q7VN90"/>
<dbReference type="STRING" id="233412.HD_0675"/>
<dbReference type="KEGG" id="hdu:HD_0675"/>
<dbReference type="eggNOG" id="COG3060">
    <property type="taxonomic scope" value="Bacteria"/>
</dbReference>
<dbReference type="HOGENOM" id="CLU_142318_0_0_6"/>
<dbReference type="OrthoDB" id="5680896at2"/>
<dbReference type="Proteomes" id="UP000001022">
    <property type="component" value="Chromosome"/>
</dbReference>
<dbReference type="GO" id="GO:0005737">
    <property type="term" value="C:cytoplasm"/>
    <property type="evidence" value="ECO:0007669"/>
    <property type="project" value="UniProtKB-SubCell"/>
</dbReference>
<dbReference type="GO" id="GO:0003677">
    <property type="term" value="F:DNA binding"/>
    <property type="evidence" value="ECO:0007669"/>
    <property type="project" value="UniProtKB-KW"/>
</dbReference>
<dbReference type="GO" id="GO:0003700">
    <property type="term" value="F:DNA-binding transcription factor activity"/>
    <property type="evidence" value="ECO:0007669"/>
    <property type="project" value="InterPro"/>
</dbReference>
<dbReference type="GO" id="GO:0009086">
    <property type="term" value="P:methionine biosynthetic process"/>
    <property type="evidence" value="ECO:0007669"/>
    <property type="project" value="UniProtKB-UniRule"/>
</dbReference>
<dbReference type="GO" id="GO:0045892">
    <property type="term" value="P:negative regulation of DNA-templated transcription"/>
    <property type="evidence" value="ECO:0007669"/>
    <property type="project" value="UniProtKB-UniRule"/>
</dbReference>
<dbReference type="Gene3D" id="1.10.140.10">
    <property type="entry name" value="MET Apo-Repressor, subunit A"/>
    <property type="match status" value="1"/>
</dbReference>
<dbReference type="HAMAP" id="MF_00744">
    <property type="entry name" value="MetJ"/>
    <property type="match status" value="1"/>
</dbReference>
<dbReference type="InterPro" id="IPR002084">
    <property type="entry name" value="Met_repressor_MetJ"/>
</dbReference>
<dbReference type="InterPro" id="IPR023453">
    <property type="entry name" value="Met_repressor_MetJ_dom_sf"/>
</dbReference>
<dbReference type="InterPro" id="IPR010985">
    <property type="entry name" value="Ribbon_hlx_hlx"/>
</dbReference>
<dbReference type="NCBIfam" id="NF003622">
    <property type="entry name" value="PRK05264.1"/>
    <property type="match status" value="1"/>
</dbReference>
<dbReference type="Pfam" id="PF01340">
    <property type="entry name" value="MetJ"/>
    <property type="match status" value="1"/>
</dbReference>
<dbReference type="SUPFAM" id="SSF47598">
    <property type="entry name" value="Ribbon-helix-helix"/>
    <property type="match status" value="1"/>
</dbReference>
<sequence length="105" mass="12285">MINWSGKYISPYAEHGKKSKQVKKITVSIPIKVLEILTNERTRRQINNLRHATNSELLCEAFLHAFTGQPLPADEDLMKERYDEIPEKAKSRMRDLGIDPDEWQY</sequence>
<keyword id="KW-0028">Amino-acid biosynthesis</keyword>
<keyword id="KW-0963">Cytoplasm</keyword>
<keyword id="KW-0238">DNA-binding</keyword>
<keyword id="KW-0486">Methionine biosynthesis</keyword>
<keyword id="KW-1185">Reference proteome</keyword>
<keyword id="KW-0678">Repressor</keyword>
<keyword id="KW-0804">Transcription</keyword>
<keyword id="KW-0805">Transcription regulation</keyword>
<comment type="function">
    <text evidence="1">This regulatory protein, when combined with SAM (S-adenosylmethionine) represses the expression of the methionine regulon and of enzymes involved in SAM synthesis.</text>
</comment>
<comment type="subunit">
    <text evidence="1">Homodimer.</text>
</comment>
<comment type="subcellular location">
    <subcellularLocation>
        <location evidence="1">Cytoplasm</location>
    </subcellularLocation>
</comment>
<comment type="domain">
    <text>Does not bind DNA by a helix-turn-helix motif.</text>
</comment>
<comment type="similarity">
    <text evidence="1">Belongs to the MetJ family.</text>
</comment>
<feature type="chain" id="PRO_0000198400" description="Met repressor">
    <location>
        <begin position="1"/>
        <end position="105"/>
    </location>
</feature>
<protein>
    <recommendedName>
        <fullName evidence="1">Met repressor</fullName>
    </recommendedName>
    <alternativeName>
        <fullName evidence="1">Met regulon regulatory protein MetJ</fullName>
    </alternativeName>
</protein>
<accession>Q7VN90</accession>
<organism>
    <name type="scientific">Haemophilus ducreyi (strain 35000HP / ATCC 700724)</name>
    <dbReference type="NCBI Taxonomy" id="233412"/>
    <lineage>
        <taxon>Bacteria</taxon>
        <taxon>Pseudomonadati</taxon>
        <taxon>Pseudomonadota</taxon>
        <taxon>Gammaproteobacteria</taxon>
        <taxon>Pasteurellales</taxon>
        <taxon>Pasteurellaceae</taxon>
        <taxon>Haemophilus</taxon>
    </lineage>
</organism>